<organism>
    <name type="scientific">Arabidopsis thaliana</name>
    <name type="common">Mouse-ear cress</name>
    <dbReference type="NCBI Taxonomy" id="3702"/>
    <lineage>
        <taxon>Eukaryota</taxon>
        <taxon>Viridiplantae</taxon>
        <taxon>Streptophyta</taxon>
        <taxon>Embryophyta</taxon>
        <taxon>Tracheophyta</taxon>
        <taxon>Spermatophyta</taxon>
        <taxon>Magnoliopsida</taxon>
        <taxon>eudicotyledons</taxon>
        <taxon>Gunneridae</taxon>
        <taxon>Pentapetalae</taxon>
        <taxon>rosids</taxon>
        <taxon>malvids</taxon>
        <taxon>Brassicales</taxon>
        <taxon>Brassicaceae</taxon>
        <taxon>Camelineae</taxon>
        <taxon>Arabidopsis</taxon>
    </lineage>
</organism>
<feature type="chain" id="PRO_0000435998" description="Probable xyloglucan galactosyltransferase GT17">
    <location>
        <begin position="1"/>
        <end position="455"/>
    </location>
</feature>
<feature type="topological domain" description="Cytoplasmic" evidence="7">
    <location>
        <begin position="1"/>
        <end position="34"/>
    </location>
</feature>
<feature type="transmembrane region" description="Helical; Signal-anchor for type II membrane protein" evidence="3">
    <location>
        <begin position="35"/>
        <end position="55"/>
    </location>
</feature>
<feature type="topological domain" description="Lumenal" evidence="7">
    <location>
        <begin position="56"/>
        <end position="455"/>
    </location>
</feature>
<feature type="glycosylation site" description="N-linked (GlcNAc...) asparagine" evidence="4">
    <location>
        <position position="70"/>
    </location>
</feature>
<feature type="glycosylation site" description="N-linked (GlcNAc...) asparagine" evidence="4">
    <location>
        <position position="169"/>
    </location>
</feature>
<feature type="glycosylation site" description="N-linked (GlcNAc...) asparagine" evidence="4">
    <location>
        <position position="230"/>
    </location>
</feature>
<feature type="glycosylation site" description="N-linked (GlcNAc...) asparagine" evidence="4">
    <location>
        <position position="390"/>
    </location>
</feature>
<feature type="glycosylation site" description="N-linked (GlcNAc...) asparagine" evidence="4">
    <location>
        <position position="426"/>
    </location>
</feature>
<feature type="sequence conflict" description="In Ref. 4; BAC42883." evidence="7" ref="4">
    <original>T</original>
    <variation>A</variation>
    <location>
        <position position="392"/>
    </location>
</feature>
<comment type="function">
    <text evidence="1">Functions in xyloglucan synthesis by adding side chains to the xylosylated glucan backbone. Involved in the galactosylation of hemicellulose xyloglucan.</text>
</comment>
<comment type="subcellular location">
    <subcellularLocation>
        <location evidence="2">Golgi apparatus membrane</location>
        <topology evidence="2">Single-pass type II membrane protein</topology>
    </subcellularLocation>
</comment>
<comment type="tissue specificity">
    <text evidence="5">Expressed in roots and hypocotyls.</text>
</comment>
<comment type="similarity">
    <text evidence="7">Belongs to the glycosyltransferase 47 family.</text>
</comment>
<sequence length="455" mass="52905">MTFNKRQVKINHWPEKNDKEKQKYSKNRETVKLTLLTLLLLCSICFLFLTLNFPFTIEFTASIPRTCDHNFTVYVYDLPKEFNIGLLQNCRHLNIYTNMCPHVANNGLGQPLHRGRTSWFSTHQFIAEMIFHARVENHPCRTYEPDTADIFYVPFYGGLYASSVFREQNLTKRDELAVRLVNYISGQRWWKRSNGRDHFLAIGRTAWDFMRSSDTDFGANMLMQMPRVMNMSVLTVERQPWNGDNHFGIPYPSYFHPYTSAEMVTWQDKMKNVERPNLFSFVGGPRKGLEKAAIRDELIKQCAESSHCELLKCENGGSRCHNPMTVLGVMARSRFCLQAPGDSFTRRSTFDAMLAGCIPVFFSPHTMYTQYMWYLPDDKRSYSVFMDEKNNTHIEQELLRISENEVVQMREIVIDLIPRLTYAHPNSTNYDLPDAVDIALEALAKQARDNVVVSL</sequence>
<name>GT17_ARATH</name>
<gene>
    <name evidence="6" type="primary">GT17</name>
    <name evidence="8" type="ordered locus">At1g68470</name>
    <name evidence="9" type="ORF">T26J14.4</name>
</gene>
<reference key="1">
    <citation type="journal article" date="2014" name="Plant J.">
        <title>The plant glycosyltransferase clone collection for functional genomics.</title>
        <authorList>
            <person name="Lao J."/>
            <person name="Oikawa A."/>
            <person name="Bromley J.R."/>
            <person name="McInerney P."/>
            <person name="Suttangkakul A."/>
            <person name="Smith-Moritz A.M."/>
            <person name="Plahar H."/>
            <person name="Chiu T.-Y."/>
            <person name="Gonzalez Fernandez-Nino S.M.G."/>
            <person name="Ebert B."/>
            <person name="Yang F."/>
            <person name="Christiansen K.M."/>
            <person name="Hansen S.F."/>
            <person name="Stonebloom S."/>
            <person name="Adams P.D."/>
            <person name="Ronald P.C."/>
            <person name="Hillson N.J."/>
            <person name="Hadi M.Z."/>
            <person name="Vega-Sanchez M.E."/>
            <person name="Loque D."/>
            <person name="Scheller H.V."/>
            <person name="Heazlewood J.L."/>
        </authorList>
    </citation>
    <scope>NUCLEOTIDE SEQUENCE [MRNA]</scope>
    <source>
        <strain>cv. Columbia</strain>
    </source>
</reference>
<reference key="2">
    <citation type="journal article" date="2000" name="Nature">
        <title>Sequence and analysis of chromosome 1 of the plant Arabidopsis thaliana.</title>
        <authorList>
            <person name="Theologis A."/>
            <person name="Ecker J.R."/>
            <person name="Palm C.J."/>
            <person name="Federspiel N.A."/>
            <person name="Kaul S."/>
            <person name="White O."/>
            <person name="Alonso J."/>
            <person name="Altafi H."/>
            <person name="Araujo R."/>
            <person name="Bowman C.L."/>
            <person name="Brooks S.Y."/>
            <person name="Buehler E."/>
            <person name="Chan A."/>
            <person name="Chao Q."/>
            <person name="Chen H."/>
            <person name="Cheuk R.F."/>
            <person name="Chin C.W."/>
            <person name="Chung M.K."/>
            <person name="Conn L."/>
            <person name="Conway A.B."/>
            <person name="Conway A.R."/>
            <person name="Creasy T.H."/>
            <person name="Dewar K."/>
            <person name="Dunn P."/>
            <person name="Etgu P."/>
            <person name="Feldblyum T.V."/>
            <person name="Feng J.-D."/>
            <person name="Fong B."/>
            <person name="Fujii C.Y."/>
            <person name="Gill J.E."/>
            <person name="Goldsmith A.D."/>
            <person name="Haas B."/>
            <person name="Hansen N.F."/>
            <person name="Hughes B."/>
            <person name="Huizar L."/>
            <person name="Hunter J.L."/>
            <person name="Jenkins J."/>
            <person name="Johnson-Hopson C."/>
            <person name="Khan S."/>
            <person name="Khaykin E."/>
            <person name="Kim C.J."/>
            <person name="Koo H.L."/>
            <person name="Kremenetskaia I."/>
            <person name="Kurtz D.B."/>
            <person name="Kwan A."/>
            <person name="Lam B."/>
            <person name="Langin-Hooper S."/>
            <person name="Lee A."/>
            <person name="Lee J.M."/>
            <person name="Lenz C.A."/>
            <person name="Li J.H."/>
            <person name="Li Y.-P."/>
            <person name="Lin X."/>
            <person name="Liu S.X."/>
            <person name="Liu Z.A."/>
            <person name="Luros J.S."/>
            <person name="Maiti R."/>
            <person name="Marziali A."/>
            <person name="Militscher J."/>
            <person name="Miranda M."/>
            <person name="Nguyen M."/>
            <person name="Nierman W.C."/>
            <person name="Osborne B.I."/>
            <person name="Pai G."/>
            <person name="Peterson J."/>
            <person name="Pham P.K."/>
            <person name="Rizzo M."/>
            <person name="Rooney T."/>
            <person name="Rowley D."/>
            <person name="Sakano H."/>
            <person name="Salzberg S.L."/>
            <person name="Schwartz J.R."/>
            <person name="Shinn P."/>
            <person name="Southwick A.M."/>
            <person name="Sun H."/>
            <person name="Tallon L.J."/>
            <person name="Tambunga G."/>
            <person name="Toriumi M.J."/>
            <person name="Town C.D."/>
            <person name="Utterback T."/>
            <person name="Van Aken S."/>
            <person name="Vaysberg M."/>
            <person name="Vysotskaia V.S."/>
            <person name="Walker M."/>
            <person name="Wu D."/>
            <person name="Yu G."/>
            <person name="Fraser C.M."/>
            <person name="Venter J.C."/>
            <person name="Davis R.W."/>
        </authorList>
    </citation>
    <scope>NUCLEOTIDE SEQUENCE [LARGE SCALE GENOMIC DNA]</scope>
    <source>
        <strain>cv. Columbia</strain>
    </source>
</reference>
<reference key="3">
    <citation type="journal article" date="2017" name="Plant J.">
        <title>Araport11: a complete reannotation of the Arabidopsis thaliana reference genome.</title>
        <authorList>
            <person name="Cheng C.Y."/>
            <person name="Krishnakumar V."/>
            <person name="Chan A.P."/>
            <person name="Thibaud-Nissen F."/>
            <person name="Schobel S."/>
            <person name="Town C.D."/>
        </authorList>
    </citation>
    <scope>GENOME REANNOTATION</scope>
    <source>
        <strain>cv. Columbia</strain>
    </source>
</reference>
<reference key="4">
    <citation type="journal article" date="2002" name="Science">
        <title>Functional annotation of a full-length Arabidopsis cDNA collection.</title>
        <authorList>
            <person name="Seki M."/>
            <person name="Narusaka M."/>
            <person name="Kamiya A."/>
            <person name="Ishida J."/>
            <person name="Satou M."/>
            <person name="Sakurai T."/>
            <person name="Nakajima M."/>
            <person name="Enju A."/>
            <person name="Akiyama K."/>
            <person name="Oono Y."/>
            <person name="Muramatsu M."/>
            <person name="Hayashizaki Y."/>
            <person name="Kawai J."/>
            <person name="Carninci P."/>
            <person name="Itoh M."/>
            <person name="Ishii Y."/>
            <person name="Arakawa T."/>
            <person name="Shibata K."/>
            <person name="Shinagawa A."/>
            <person name="Shinozaki K."/>
        </authorList>
    </citation>
    <scope>NUCLEOTIDE SEQUENCE [LARGE SCALE MRNA]</scope>
    <source>
        <strain>cv. Columbia</strain>
    </source>
</reference>
<reference key="5">
    <citation type="journal article" date="2004" name="Plant Physiol.">
        <title>Molecular analysis of 10 coding regions from Arabidopsis that are homologous to the MUR3 xyloglucan galactosyltransferase.</title>
        <authorList>
            <person name="Li X."/>
            <person name="Cordero I."/>
            <person name="Caplan J."/>
            <person name="Moelhoej M."/>
            <person name="Reiter W.D."/>
        </authorList>
    </citation>
    <scope>TISSUE SPECIFICITY</scope>
</reference>
<accession>Q9CA34</accession>
<accession>Q8GXF5</accession>
<dbReference type="EC" id="2.4.1.-" evidence="7"/>
<dbReference type="EMBL" id="KJ138946">
    <property type="protein sequence ID" value="AHL38886.1"/>
    <property type="molecule type" value="mRNA"/>
</dbReference>
<dbReference type="EMBL" id="AC011915">
    <property type="protein sequence ID" value="AAG52396.1"/>
    <property type="molecule type" value="Genomic_DNA"/>
</dbReference>
<dbReference type="EMBL" id="CP002684">
    <property type="protein sequence ID" value="AEE34797.1"/>
    <property type="molecule type" value="Genomic_DNA"/>
</dbReference>
<dbReference type="EMBL" id="AK118265">
    <property type="protein sequence ID" value="BAC42883.1"/>
    <property type="molecule type" value="mRNA"/>
</dbReference>
<dbReference type="PIR" id="G96708">
    <property type="entry name" value="G96708"/>
</dbReference>
<dbReference type="RefSeq" id="NP_177014.1">
    <property type="nucleotide sequence ID" value="NM_105518.3"/>
</dbReference>
<dbReference type="STRING" id="3702.Q9CA34"/>
<dbReference type="CAZy" id="GT47">
    <property type="family name" value="Glycosyltransferase Family 47"/>
</dbReference>
<dbReference type="GlyCosmos" id="Q9CA34">
    <property type="glycosylation" value="5 sites, No reported glycans"/>
</dbReference>
<dbReference type="GlyGen" id="Q9CA34">
    <property type="glycosylation" value="5 sites"/>
</dbReference>
<dbReference type="PaxDb" id="3702-AT1G68470.1"/>
<dbReference type="ProteomicsDB" id="247302"/>
<dbReference type="EnsemblPlants" id="AT1G68470.1">
    <property type="protein sequence ID" value="AT1G68470.1"/>
    <property type="gene ID" value="AT1G68470"/>
</dbReference>
<dbReference type="GeneID" id="843176"/>
<dbReference type="Gramene" id="AT1G68470.1">
    <property type="protein sequence ID" value="AT1G68470.1"/>
    <property type="gene ID" value="AT1G68470"/>
</dbReference>
<dbReference type="KEGG" id="ath:AT1G68470"/>
<dbReference type="Araport" id="AT1G68470"/>
<dbReference type="TAIR" id="AT1G68470"/>
<dbReference type="eggNOG" id="KOG1021">
    <property type="taxonomic scope" value="Eukaryota"/>
</dbReference>
<dbReference type="HOGENOM" id="CLU_012659_4_1_1"/>
<dbReference type="InParanoid" id="Q9CA34"/>
<dbReference type="OMA" id="AEMVTWQ"/>
<dbReference type="OrthoDB" id="1924787at2759"/>
<dbReference type="PhylomeDB" id="Q9CA34"/>
<dbReference type="PRO" id="PR:Q9CA34"/>
<dbReference type="Proteomes" id="UP000006548">
    <property type="component" value="Chromosome 1"/>
</dbReference>
<dbReference type="ExpressionAtlas" id="Q9CA34">
    <property type="expression patterns" value="baseline and differential"/>
</dbReference>
<dbReference type="GO" id="GO:0000139">
    <property type="term" value="C:Golgi membrane"/>
    <property type="evidence" value="ECO:0007669"/>
    <property type="project" value="UniProtKB-SubCell"/>
</dbReference>
<dbReference type="GO" id="GO:0016757">
    <property type="term" value="F:glycosyltransferase activity"/>
    <property type="evidence" value="ECO:0007669"/>
    <property type="project" value="UniProtKB-KW"/>
</dbReference>
<dbReference type="GO" id="GO:0006486">
    <property type="term" value="P:protein glycosylation"/>
    <property type="evidence" value="ECO:0007669"/>
    <property type="project" value="InterPro"/>
</dbReference>
<dbReference type="InterPro" id="IPR004263">
    <property type="entry name" value="Exostosin"/>
</dbReference>
<dbReference type="InterPro" id="IPR040911">
    <property type="entry name" value="Exostosin_GT47"/>
</dbReference>
<dbReference type="PANTHER" id="PTHR11062">
    <property type="entry name" value="EXOSTOSIN HEPARAN SULFATE GLYCOSYLTRANSFERASE -RELATED"/>
    <property type="match status" value="1"/>
</dbReference>
<dbReference type="PANTHER" id="PTHR11062:SF255">
    <property type="entry name" value="XYLOGLUCAN GALACTOSYLTRANSFERASE GT17-RELATED"/>
    <property type="match status" value="1"/>
</dbReference>
<dbReference type="Pfam" id="PF03016">
    <property type="entry name" value="Exostosin_GT47"/>
    <property type="match status" value="1"/>
</dbReference>
<protein>
    <recommendedName>
        <fullName evidence="7">Probable xyloglucan galactosyltransferase GT17</fullName>
        <ecNumber evidence="7">2.4.1.-</ecNumber>
    </recommendedName>
    <alternativeName>
        <fullName evidence="6">Glycosyltransferase 17</fullName>
        <shortName evidence="6">AtGT17</shortName>
    </alternativeName>
</protein>
<evidence type="ECO:0000250" key="1">
    <source>
        <dbReference type="UniProtKB" id="F4K6F1"/>
    </source>
</evidence>
<evidence type="ECO:0000250" key="2">
    <source>
        <dbReference type="UniProtKB" id="Q7XJ98"/>
    </source>
</evidence>
<evidence type="ECO:0000255" key="3"/>
<evidence type="ECO:0000255" key="4">
    <source>
        <dbReference type="PROSITE-ProRule" id="PRU00498"/>
    </source>
</evidence>
<evidence type="ECO:0000269" key="5">
    <source>
    </source>
</evidence>
<evidence type="ECO:0000303" key="6">
    <source>
    </source>
</evidence>
<evidence type="ECO:0000305" key="7"/>
<evidence type="ECO:0000312" key="8">
    <source>
        <dbReference type="Araport" id="AT1G68470"/>
    </source>
</evidence>
<evidence type="ECO:0000312" key="9">
    <source>
        <dbReference type="EMBL" id="AAG52396.1"/>
    </source>
</evidence>
<keyword id="KW-0325">Glycoprotein</keyword>
<keyword id="KW-0328">Glycosyltransferase</keyword>
<keyword id="KW-0333">Golgi apparatus</keyword>
<keyword id="KW-0472">Membrane</keyword>
<keyword id="KW-1185">Reference proteome</keyword>
<keyword id="KW-0735">Signal-anchor</keyword>
<keyword id="KW-0808">Transferase</keyword>
<keyword id="KW-0812">Transmembrane</keyword>
<keyword id="KW-1133">Transmembrane helix</keyword>
<proteinExistence type="evidence at transcript level"/>